<proteinExistence type="evidence at protein level"/>
<evidence type="ECO:0000250" key="1"/>
<evidence type="ECO:0000250" key="2">
    <source>
        <dbReference type="UniProtKB" id="A0A0M3KKW3"/>
    </source>
</evidence>
<evidence type="ECO:0000250" key="3">
    <source>
        <dbReference type="UniProtKB" id="P0DMB4"/>
    </source>
</evidence>
<evidence type="ECO:0000250" key="4">
    <source>
        <dbReference type="UniProtKB" id="P0DMB7"/>
    </source>
</evidence>
<evidence type="ECO:0000255" key="5">
    <source>
        <dbReference type="PROSITE-ProRule" id="PRU10037"/>
    </source>
</evidence>
<evidence type="ECO:0000269" key="6">
    <source>
    </source>
</evidence>
<evidence type="ECO:0000303" key="7">
    <source>
    </source>
</evidence>
<evidence type="ECO:0000305" key="8"/>
<evidence type="ECO:0000305" key="9">
    <source>
    </source>
</evidence>
<comment type="function">
    <text evidence="3 4">Catalyzes the hydrolysis of phosphatidylcholine with phospholipase A1 activity (By similarity). May act as an allergen and induce hemolytic activity (By similarity).</text>
</comment>
<comment type="catalytic activity">
    <reaction evidence="3">
        <text>a 1,2-diacyl-sn-glycero-3-phosphocholine + H2O = a 2-acyl-sn-glycero-3-phosphocholine + a fatty acid + H(+)</text>
        <dbReference type="Rhea" id="RHEA:18689"/>
        <dbReference type="ChEBI" id="CHEBI:15377"/>
        <dbReference type="ChEBI" id="CHEBI:15378"/>
        <dbReference type="ChEBI" id="CHEBI:28868"/>
        <dbReference type="ChEBI" id="CHEBI:57643"/>
        <dbReference type="ChEBI" id="CHEBI:57875"/>
        <dbReference type="EC" id="3.1.1.32"/>
    </reaction>
</comment>
<comment type="subcellular location">
    <subcellularLocation>
        <location evidence="6">Secreted</location>
    </subcellularLocation>
</comment>
<comment type="tissue specificity">
    <text evidence="9">Expressed by the venom gland.</text>
</comment>
<comment type="allergen">
    <text evidence="1">Causes an allergic reaction in human.</text>
</comment>
<comment type="similarity">
    <text evidence="8">Belongs to the AB hydrolase superfamily. Lipase family.</text>
</comment>
<feature type="chain" id="PRO_0000401920" description="Phospholipase A1" evidence="6">
    <location>
        <begin position="1"/>
        <end position="301"/>
    </location>
</feature>
<feature type="active site" description="Nucleophile" evidence="2">
    <location>
        <position position="137"/>
    </location>
</feature>
<feature type="active site" description="Charge relay system" evidence="5">
    <location>
        <position position="165"/>
    </location>
</feature>
<feature type="active site" description="Charge relay system" evidence="5">
    <location>
        <position position="230"/>
    </location>
</feature>
<feature type="disulfide bond" evidence="2">
    <location>
        <begin position="4"/>
        <end position="87"/>
    </location>
</feature>
<feature type="disulfide bond" evidence="2">
    <location>
        <begin position="176"/>
        <end position="181"/>
    </location>
</feature>
<feature type="disulfide bond" evidence="2">
    <location>
        <begin position="219"/>
        <end position="228"/>
    </location>
</feature>
<feature type="disulfide bond" evidence="2">
    <location>
        <begin position="245"/>
        <end position="269"/>
    </location>
</feature>
<feature type="disulfide bond" evidence="2">
    <location>
        <begin position="246"/>
        <end position="294"/>
    </location>
</feature>
<feature type="disulfide bond" evidence="2">
    <location>
        <begin position="262"/>
        <end position="267"/>
    </location>
</feature>
<dbReference type="EC" id="3.1.1.32" evidence="3"/>
<dbReference type="SMR" id="P0CH87"/>
<dbReference type="Allergome" id="3525">
    <property type="allergen name" value="Vesp c 1.0101"/>
</dbReference>
<dbReference type="Allergome" id="672">
    <property type="allergen name" value="Vesp c 1"/>
</dbReference>
<dbReference type="ESTHER" id="vescr-PA1">
    <property type="family name" value="Insect_Phospholipase"/>
</dbReference>
<dbReference type="GO" id="GO:0005615">
    <property type="term" value="C:extracellular space"/>
    <property type="evidence" value="ECO:0007669"/>
    <property type="project" value="TreeGrafter"/>
</dbReference>
<dbReference type="GO" id="GO:0008970">
    <property type="term" value="F:phospholipase A1 activity"/>
    <property type="evidence" value="ECO:0007669"/>
    <property type="project" value="UniProtKB-EC"/>
</dbReference>
<dbReference type="GO" id="GO:0031640">
    <property type="term" value="P:killing of cells of another organism"/>
    <property type="evidence" value="ECO:0007669"/>
    <property type="project" value="UniProtKB-KW"/>
</dbReference>
<dbReference type="GO" id="GO:0016042">
    <property type="term" value="P:lipid catabolic process"/>
    <property type="evidence" value="ECO:0007669"/>
    <property type="project" value="UniProtKB-KW"/>
</dbReference>
<dbReference type="CDD" id="cd00707">
    <property type="entry name" value="Pancreat_lipase_like"/>
    <property type="match status" value="1"/>
</dbReference>
<dbReference type="Gene3D" id="3.40.50.1820">
    <property type="entry name" value="alpha/beta hydrolase"/>
    <property type="match status" value="1"/>
</dbReference>
<dbReference type="InterPro" id="IPR029058">
    <property type="entry name" value="AB_hydrolase_fold"/>
</dbReference>
<dbReference type="InterPro" id="IPR002334">
    <property type="entry name" value="Allerg_PlipaseA1"/>
</dbReference>
<dbReference type="InterPro" id="IPR013818">
    <property type="entry name" value="Lipase"/>
</dbReference>
<dbReference type="InterPro" id="IPR033906">
    <property type="entry name" value="Lipase_N"/>
</dbReference>
<dbReference type="InterPro" id="IPR000734">
    <property type="entry name" value="TAG_lipase"/>
</dbReference>
<dbReference type="PANTHER" id="PTHR11610">
    <property type="entry name" value="LIPASE"/>
    <property type="match status" value="1"/>
</dbReference>
<dbReference type="PANTHER" id="PTHR11610:SF178">
    <property type="entry name" value="LIPASE MEMBER H-A-LIKE PROTEIN"/>
    <property type="match status" value="1"/>
</dbReference>
<dbReference type="Pfam" id="PF00151">
    <property type="entry name" value="Lipase"/>
    <property type="match status" value="1"/>
</dbReference>
<dbReference type="PRINTS" id="PR00825">
    <property type="entry name" value="DOLALLERGEN"/>
</dbReference>
<dbReference type="PRINTS" id="PR00821">
    <property type="entry name" value="TAGLIPASE"/>
</dbReference>
<dbReference type="SUPFAM" id="SSF53474">
    <property type="entry name" value="alpha/beta-Hydrolases"/>
    <property type="match status" value="1"/>
</dbReference>
<dbReference type="PROSITE" id="PS00120">
    <property type="entry name" value="LIPASE_SER"/>
    <property type="match status" value="1"/>
</dbReference>
<reference key="1">
    <citation type="journal article" date="2005" name="J. Allergy Clin. Immunol.">
        <title>Sol i 1, the phospholipase allergen of imported fire ant venom.</title>
        <authorList>
            <person name="Hoffman D.R."/>
            <person name="Sakell R.H."/>
            <person name="Schmidt M."/>
        </authorList>
    </citation>
    <scope>PROTEIN SEQUENCE</scope>
    <scope>SUBCELLULAR LOCATION</scope>
    <source>
        <tissue>Venom</tissue>
    </source>
</reference>
<sequence>FNPCPYSDDTVKMIVLTRENKKYDFYTLDTIKNHNEFKDTITLKPHVFITHGFTSSATAENFVVMAKALLDKGNYLVILTDWRMAACTNEIAGLKLAYYPYAASNTRLVGNYIATVTKMLVQKYNVPMANIRLIGHSLGAHISGFAGKKVQELGLGKYPEIIGLDPAGPSFKSNDCSQRICETDANYVQIIHTSNRLGTERTLGTVDFYMNNGYNQPGCGLPIIGETCSHTRAVKYFTECIKHECCLIGVPKSKNPQPVSKCTRNECVCVGLNAKTYPKTGSFYVPVESKAPYCNNKGKII</sequence>
<keyword id="KW-0020">Allergen</keyword>
<keyword id="KW-0204">Cytolysis</keyword>
<keyword id="KW-0903">Direct protein sequencing</keyword>
<keyword id="KW-1015">Disulfide bond</keyword>
<keyword id="KW-0354">Hemolysis</keyword>
<keyword id="KW-0378">Hydrolase</keyword>
<keyword id="KW-0442">Lipid degradation</keyword>
<keyword id="KW-0443">Lipid metabolism</keyword>
<keyword id="KW-0964">Secreted</keyword>
<accession>P0CH87</accession>
<name>PA1_VESCR</name>
<protein>
    <recommendedName>
        <fullName evidence="8">Phospholipase A1</fullName>
        <shortName evidence="8">PLA1</shortName>
        <ecNumber evidence="3">3.1.1.32</ecNumber>
    </recommendedName>
    <allergenName evidence="7">Vesp c 1</allergenName>
</protein>
<organism>
    <name type="scientific">Vespa crabro</name>
    <name type="common">European hornet</name>
    <dbReference type="NCBI Taxonomy" id="7445"/>
    <lineage>
        <taxon>Eukaryota</taxon>
        <taxon>Metazoa</taxon>
        <taxon>Ecdysozoa</taxon>
        <taxon>Arthropoda</taxon>
        <taxon>Hexapoda</taxon>
        <taxon>Insecta</taxon>
        <taxon>Pterygota</taxon>
        <taxon>Neoptera</taxon>
        <taxon>Endopterygota</taxon>
        <taxon>Hymenoptera</taxon>
        <taxon>Apocrita</taxon>
        <taxon>Aculeata</taxon>
        <taxon>Vespoidea</taxon>
        <taxon>Vespidae</taxon>
        <taxon>Vespinae</taxon>
        <taxon>Vespa</taxon>
    </lineage>
</organism>